<comment type="function">
    <text evidence="5">Transcriptional corepressor which does not bind directly to DNA and may regulate transcription through recruitment of histone deacetylases to gene promoters. Regulates cell adhesion, migration and proliferation. May be required for segmental gene expression during hindbrain development.</text>
</comment>
<comment type="subunit">
    <text evidence="1 5">Interacts with DCAF7 and PHB2 (By similarity). Interacts with TLE4; increases transcriptional repression.</text>
</comment>
<comment type="subcellular location">
    <subcellularLocation>
        <location evidence="5">Nucleus</location>
    </subcellularLocation>
    <subcellularLocation>
        <location evidence="5">Cytoplasm</location>
    </subcellularLocation>
</comment>
<comment type="tissue specificity">
    <text evidence="5">Expressed in mammary epithelium.</text>
</comment>
<comment type="developmental stage">
    <text evidence="5">Expressed in mammary placodes from 11.5 dpc onward and in the developing intestinal epithelium.</text>
</comment>
<comment type="similarity">
    <text evidence="6">Belongs to the Elbow/Noc family.</text>
</comment>
<dbReference type="EMBL" id="AC115820">
    <property type="status" value="NOT_ANNOTATED_CDS"/>
    <property type="molecule type" value="Genomic_DNA"/>
</dbReference>
<dbReference type="CCDS" id="CCDS52532.1"/>
<dbReference type="RefSeq" id="NP_001094972.1">
    <property type="nucleotide sequence ID" value="NM_001101502.1"/>
</dbReference>
<dbReference type="FunCoup" id="P0CL69">
    <property type="interactions" value="1145"/>
</dbReference>
<dbReference type="STRING" id="10090.ENSMUSP00000128757"/>
<dbReference type="GlyGen" id="P0CL69">
    <property type="glycosylation" value="1 site, 1 O-linked glycan (1 site)"/>
</dbReference>
<dbReference type="iPTMnet" id="P0CL69"/>
<dbReference type="PhosphoSitePlus" id="P0CL69"/>
<dbReference type="SwissPalm" id="P0CL69"/>
<dbReference type="PaxDb" id="10090-ENSMUSP00000128757"/>
<dbReference type="ProteomicsDB" id="302140"/>
<dbReference type="Pumba" id="P0CL69"/>
<dbReference type="Antibodypedia" id="10770">
    <property type="antibodies" value="295 antibodies from 31 providers"/>
</dbReference>
<dbReference type="Ensembl" id="ENSMUST00000154256.3">
    <property type="protein sequence ID" value="ENSMUSP00000128757.2"/>
    <property type="gene ID" value="ENSMUSG00000085795.9"/>
</dbReference>
<dbReference type="GeneID" id="353310"/>
<dbReference type="KEGG" id="mmu:353310"/>
<dbReference type="UCSC" id="uc012gbq.1">
    <property type="organism name" value="mouse"/>
</dbReference>
<dbReference type="AGR" id="MGI:2662729"/>
<dbReference type="CTD" id="353310"/>
<dbReference type="MGI" id="MGI:2662729">
    <property type="gene designation" value="Zfp703"/>
</dbReference>
<dbReference type="VEuPathDB" id="HostDB:ENSMUSG00000085795"/>
<dbReference type="eggNOG" id="ENOG502QV57">
    <property type="taxonomic scope" value="Eukaryota"/>
</dbReference>
<dbReference type="GeneTree" id="ENSGT00390000014618"/>
<dbReference type="HOGENOM" id="CLU_035082_1_0_1"/>
<dbReference type="InParanoid" id="P0CL69"/>
<dbReference type="OMA" id="SQAPHMD"/>
<dbReference type="OrthoDB" id="10054079at2759"/>
<dbReference type="PhylomeDB" id="P0CL69"/>
<dbReference type="TreeFam" id="TF324968"/>
<dbReference type="Reactome" id="R-MMU-212436">
    <property type="pathway name" value="Generic Transcription Pathway"/>
</dbReference>
<dbReference type="BioGRID-ORCS" id="353310">
    <property type="hits" value="3 hits in 80 CRISPR screens"/>
</dbReference>
<dbReference type="PRO" id="PR:P0CL69"/>
<dbReference type="Proteomes" id="UP000000589">
    <property type="component" value="Chromosome 8"/>
</dbReference>
<dbReference type="RNAct" id="P0CL69">
    <property type="molecule type" value="protein"/>
</dbReference>
<dbReference type="Bgee" id="ENSMUSG00000085795">
    <property type="expression patterns" value="Expressed in prostate gland ventral lobe and 258 other cell types or tissues"/>
</dbReference>
<dbReference type="ExpressionAtlas" id="P0CL69">
    <property type="expression patterns" value="baseline and differential"/>
</dbReference>
<dbReference type="GO" id="GO:0005737">
    <property type="term" value="C:cytoplasm"/>
    <property type="evidence" value="ECO:0000314"/>
    <property type="project" value="UniProtKB"/>
</dbReference>
<dbReference type="GO" id="GO:0016363">
    <property type="term" value="C:nuclear matrix"/>
    <property type="evidence" value="ECO:0000250"/>
    <property type="project" value="UniProtKB"/>
</dbReference>
<dbReference type="GO" id="GO:0005634">
    <property type="term" value="C:nucleus"/>
    <property type="evidence" value="ECO:0000314"/>
    <property type="project" value="UniProtKB"/>
</dbReference>
<dbReference type="GO" id="GO:0032991">
    <property type="term" value="C:protein-containing complex"/>
    <property type="evidence" value="ECO:0000250"/>
    <property type="project" value="UniProtKB"/>
</dbReference>
<dbReference type="GO" id="GO:0140297">
    <property type="term" value="F:DNA-binding transcription factor binding"/>
    <property type="evidence" value="ECO:0000353"/>
    <property type="project" value="UniProtKB"/>
</dbReference>
<dbReference type="GO" id="GO:0008270">
    <property type="term" value="F:zinc ion binding"/>
    <property type="evidence" value="ECO:0007669"/>
    <property type="project" value="UniProtKB-KW"/>
</dbReference>
<dbReference type="GO" id="GO:0034333">
    <property type="term" value="P:adherens junction assembly"/>
    <property type="evidence" value="ECO:0000314"/>
    <property type="project" value="UniProtKB"/>
</dbReference>
<dbReference type="GO" id="GO:0071392">
    <property type="term" value="P:cellular response to estradiol stimulus"/>
    <property type="evidence" value="ECO:0000250"/>
    <property type="project" value="UniProtKB"/>
</dbReference>
<dbReference type="GO" id="GO:0060644">
    <property type="term" value="P:mammary gland epithelial cell differentiation"/>
    <property type="evidence" value="ECO:0000250"/>
    <property type="project" value="UniProtKB"/>
</dbReference>
<dbReference type="GO" id="GO:0045892">
    <property type="term" value="P:negative regulation of DNA-templated transcription"/>
    <property type="evidence" value="ECO:0000314"/>
    <property type="project" value="UniProtKB"/>
</dbReference>
<dbReference type="GO" id="GO:0034111">
    <property type="term" value="P:negative regulation of homotypic cell-cell adhesion"/>
    <property type="evidence" value="ECO:0000314"/>
    <property type="project" value="UniProtKB"/>
</dbReference>
<dbReference type="GO" id="GO:0030335">
    <property type="term" value="P:positive regulation of cell migration"/>
    <property type="evidence" value="ECO:0000314"/>
    <property type="project" value="UniProtKB"/>
</dbReference>
<dbReference type="GO" id="GO:0008284">
    <property type="term" value="P:positive regulation of cell population proliferation"/>
    <property type="evidence" value="ECO:0000250"/>
    <property type="project" value="UniProtKB"/>
</dbReference>
<dbReference type="GO" id="GO:0010718">
    <property type="term" value="P:positive regulation of epithelial to mesenchymal transition"/>
    <property type="evidence" value="ECO:0000314"/>
    <property type="project" value="UniProtKB"/>
</dbReference>
<dbReference type="GO" id="GO:0033601">
    <property type="term" value="P:positive regulation of mammary gland epithelial cell proliferation"/>
    <property type="evidence" value="ECO:0000314"/>
    <property type="project" value="UniProtKB"/>
</dbReference>
<dbReference type="GO" id="GO:0060828">
    <property type="term" value="P:regulation of canonical Wnt signaling pathway"/>
    <property type="evidence" value="ECO:0000314"/>
    <property type="project" value="UniProtKB"/>
</dbReference>
<dbReference type="GO" id="GO:0051726">
    <property type="term" value="P:regulation of cell cycle"/>
    <property type="evidence" value="ECO:0000250"/>
    <property type="project" value="UniProtKB"/>
</dbReference>
<dbReference type="GO" id="GO:0006355">
    <property type="term" value="P:regulation of DNA-templated transcription"/>
    <property type="evidence" value="ECO:0000250"/>
    <property type="project" value="UniProtKB"/>
</dbReference>
<dbReference type="GO" id="GO:0017015">
    <property type="term" value="P:regulation of transforming growth factor beta receptor signaling pathway"/>
    <property type="evidence" value="ECO:0000314"/>
    <property type="project" value="UniProtKB"/>
</dbReference>
<dbReference type="FunFam" id="3.30.160.60:FF:000129">
    <property type="entry name" value="Zinc finger protein 503"/>
    <property type="match status" value="1"/>
</dbReference>
<dbReference type="Gene3D" id="3.30.160.60">
    <property type="entry name" value="Classic Zinc Finger"/>
    <property type="match status" value="1"/>
</dbReference>
<dbReference type="InterPro" id="IPR051520">
    <property type="entry name" value="Elbow/Noc_ZnFinger"/>
</dbReference>
<dbReference type="InterPro" id="IPR022129">
    <property type="entry name" value="Tscrpt_rep_NocA-like"/>
</dbReference>
<dbReference type="InterPro" id="IPR013087">
    <property type="entry name" value="Znf_C2H2_type"/>
</dbReference>
<dbReference type="PANTHER" id="PTHR12522:SF2">
    <property type="entry name" value="ZINC FINGER PROTEIN 703"/>
    <property type="match status" value="1"/>
</dbReference>
<dbReference type="PANTHER" id="PTHR12522">
    <property type="entry name" value="ZINC-FINGER PROTEIN NOLZ1-RELATED"/>
    <property type="match status" value="1"/>
</dbReference>
<dbReference type="Pfam" id="PF12402">
    <property type="entry name" value="nlz1"/>
    <property type="match status" value="1"/>
</dbReference>
<dbReference type="PROSITE" id="PS50157">
    <property type="entry name" value="ZINC_FINGER_C2H2_2"/>
    <property type="match status" value="1"/>
</dbReference>
<name>ZN703_MOUSE</name>
<keyword id="KW-0007">Acetylation</keyword>
<keyword id="KW-0963">Cytoplasm</keyword>
<keyword id="KW-0479">Metal-binding</keyword>
<keyword id="KW-0488">Methylation</keyword>
<keyword id="KW-0539">Nucleus</keyword>
<keyword id="KW-0597">Phosphoprotein</keyword>
<keyword id="KW-1185">Reference proteome</keyword>
<keyword id="KW-0678">Repressor</keyword>
<keyword id="KW-0804">Transcription</keyword>
<keyword id="KW-0805">Transcription regulation</keyword>
<keyword id="KW-0862">Zinc</keyword>
<keyword id="KW-0863">Zinc-finger</keyword>
<accession>P0CL69</accession>
<gene>
    <name type="primary">Znf703</name>
    <name type="synonym">Zeppo1</name>
    <name type="synonym">Zfp703</name>
    <name type="synonym">Zpo1</name>
</gene>
<protein>
    <recommendedName>
        <fullName>Zinc finger protein 703</fullName>
    </recommendedName>
    <alternativeName>
        <fullName>Zinc finger elbow-related proline domain protein 1</fullName>
    </alternativeName>
</protein>
<evidence type="ECO:0000250" key="1"/>
<evidence type="ECO:0000250" key="2">
    <source>
        <dbReference type="UniProtKB" id="Q9H7S9"/>
    </source>
</evidence>
<evidence type="ECO:0000255" key="3">
    <source>
        <dbReference type="PROSITE-ProRule" id="PRU00042"/>
    </source>
</evidence>
<evidence type="ECO:0000256" key="4">
    <source>
        <dbReference type="SAM" id="MobiDB-lite"/>
    </source>
</evidence>
<evidence type="ECO:0000269" key="5">
    <source>
    </source>
</evidence>
<evidence type="ECO:0000305" key="6"/>
<evidence type="ECO:0007744" key="7">
    <source>
    </source>
</evidence>
<feature type="initiator methionine" description="Removed" evidence="2">
    <location>
        <position position="1"/>
    </location>
</feature>
<feature type="chain" id="PRO_0000407219" description="Zinc finger protein 703">
    <location>
        <begin position="2"/>
        <end position="594"/>
    </location>
</feature>
<feature type="zinc finger region" description="C2H2-type" evidence="3">
    <location>
        <begin position="460"/>
        <end position="488"/>
    </location>
</feature>
<feature type="region of interest" description="Disordered" evidence="4">
    <location>
        <begin position="1"/>
        <end position="37"/>
    </location>
</feature>
<feature type="region of interest" description="Disordered" evidence="4">
    <location>
        <begin position="100"/>
        <end position="298"/>
    </location>
</feature>
<feature type="region of interest" description="Disordered" evidence="4">
    <location>
        <begin position="345"/>
        <end position="370"/>
    </location>
</feature>
<feature type="compositionally biased region" description="Polar residues" evidence="4">
    <location>
        <begin position="1"/>
        <end position="14"/>
    </location>
</feature>
<feature type="compositionally biased region" description="Gly residues" evidence="4">
    <location>
        <begin position="17"/>
        <end position="30"/>
    </location>
</feature>
<feature type="compositionally biased region" description="Low complexity" evidence="4">
    <location>
        <begin position="134"/>
        <end position="145"/>
    </location>
</feature>
<feature type="compositionally biased region" description="Low complexity" evidence="4">
    <location>
        <begin position="177"/>
        <end position="191"/>
    </location>
</feature>
<feature type="compositionally biased region" description="Low complexity" evidence="4">
    <location>
        <begin position="212"/>
        <end position="225"/>
    </location>
</feature>
<feature type="compositionally biased region" description="Basic and acidic residues" evidence="4">
    <location>
        <begin position="246"/>
        <end position="256"/>
    </location>
</feature>
<feature type="compositionally biased region" description="Gly residues" evidence="4">
    <location>
        <begin position="345"/>
        <end position="356"/>
    </location>
</feature>
<feature type="modified residue" description="N-acetylserine" evidence="2">
    <location>
        <position position="2"/>
    </location>
</feature>
<feature type="modified residue" description="Phosphoserine" evidence="2">
    <location>
        <position position="257"/>
    </location>
</feature>
<feature type="modified residue" description="Omega-N-methylarginine" evidence="7">
    <location>
        <position position="584"/>
    </location>
</feature>
<organism>
    <name type="scientific">Mus musculus</name>
    <name type="common">Mouse</name>
    <dbReference type="NCBI Taxonomy" id="10090"/>
    <lineage>
        <taxon>Eukaryota</taxon>
        <taxon>Metazoa</taxon>
        <taxon>Chordata</taxon>
        <taxon>Craniata</taxon>
        <taxon>Vertebrata</taxon>
        <taxon>Euteleostomi</taxon>
        <taxon>Mammalia</taxon>
        <taxon>Eutheria</taxon>
        <taxon>Euarchontoglires</taxon>
        <taxon>Glires</taxon>
        <taxon>Rodentia</taxon>
        <taxon>Myomorpha</taxon>
        <taxon>Muroidea</taxon>
        <taxon>Muridae</taxon>
        <taxon>Murinae</taxon>
        <taxon>Mus</taxon>
        <taxon>Mus</taxon>
    </lineage>
</organism>
<reference key="1">
    <citation type="journal article" date="2009" name="PLoS Biol.">
        <title>Lineage-specific biology revealed by a finished genome assembly of the mouse.</title>
        <authorList>
            <person name="Church D.M."/>
            <person name="Goodstadt L."/>
            <person name="Hillier L.W."/>
            <person name="Zody M.C."/>
            <person name="Goldstein S."/>
            <person name="She X."/>
            <person name="Bult C.J."/>
            <person name="Agarwala R."/>
            <person name="Cherry J.L."/>
            <person name="DiCuccio M."/>
            <person name="Hlavina W."/>
            <person name="Kapustin Y."/>
            <person name="Meric P."/>
            <person name="Maglott D."/>
            <person name="Birtle Z."/>
            <person name="Marques A.C."/>
            <person name="Graves T."/>
            <person name="Zhou S."/>
            <person name="Teague B."/>
            <person name="Potamousis K."/>
            <person name="Churas C."/>
            <person name="Place M."/>
            <person name="Herschleb J."/>
            <person name="Runnheim R."/>
            <person name="Forrest D."/>
            <person name="Amos-Landgraf J."/>
            <person name="Schwartz D.C."/>
            <person name="Cheng Z."/>
            <person name="Lindblad-Toh K."/>
            <person name="Eichler E.E."/>
            <person name="Ponting C.P."/>
        </authorList>
    </citation>
    <scope>NUCLEOTIDE SEQUENCE [LARGE SCALE GENOMIC DNA]</scope>
    <source>
        <strain>C57BL/6J</strain>
    </source>
</reference>
<reference key="2">
    <citation type="journal article" date="2011" name="Genes Dev.">
        <title>Zeppo1 is a novel metastasis promoter that represses E-cadherin expression and regulates p120-catenin isoform expression and localization.</title>
        <authorList>
            <person name="Slorach E.M."/>
            <person name="Chou J."/>
            <person name="Werb Z."/>
        </authorList>
    </citation>
    <scope>FUNCTION</scope>
    <scope>SUBCELLULAR LOCATION</scope>
    <scope>TISSUE SPECIFICITY</scope>
    <scope>DEVELOPMENTAL STAGE</scope>
    <scope>INTERACTION WITH TLE4</scope>
</reference>
<reference key="3">
    <citation type="journal article" date="2014" name="Mol. Cell. Proteomics">
        <title>Immunoaffinity enrichment and mass spectrometry analysis of protein methylation.</title>
        <authorList>
            <person name="Guo A."/>
            <person name="Gu H."/>
            <person name="Zhou J."/>
            <person name="Mulhern D."/>
            <person name="Wang Y."/>
            <person name="Lee K.A."/>
            <person name="Yang V."/>
            <person name="Aguiar M."/>
            <person name="Kornhauser J."/>
            <person name="Jia X."/>
            <person name="Ren J."/>
            <person name="Beausoleil S.A."/>
            <person name="Silva J.C."/>
            <person name="Vemulapalli V."/>
            <person name="Bedford M.T."/>
            <person name="Comb M.J."/>
        </authorList>
    </citation>
    <scope>METHYLATION [LARGE SCALE ANALYSIS] AT ARG-584</scope>
    <scope>IDENTIFICATION BY MASS SPECTROMETRY [LARGE SCALE ANALYSIS]</scope>
    <source>
        <tissue>Embryo</tissue>
    </source>
</reference>
<sequence length="594" mass="58730">MSDSPAGSNPRTPESSGSGGGSSSGGGGGKRPAVPAVVSLLPPADPLRQANRLPIRVLKMLSAHTGHLLHPEYLQPLSSTPVSPIELDAKKSPLALLAQTCSQIGKPDPPPSSKLNSVAAAAANGLGSEKDPSRSAPGAASAAAALKQLGDSPAEDKSSFKPYSKGSGGGDSRKDSGSSSVSSTTSSSSSSPGDKAGFRVPSAACPPFPPHGASVSTSSNSSSPGGSRGGSPHHSDCKNGGGGAGELDKKEQEAKPSPEPAAGSRGSGGDSAHGGPEATASGRKSEPPSALVGAGHVAPVSPYKPGHSVFPLPPSSIGYHGSIVGAYAGYPSQFVPGLDPSKSGLVGGQLSGGLGLPPGKPPSSSPLTGASPPSFLQGLCRDPYCLGGYHSASHLGGSSCSTCSAHDPTGPSLKASGYPLVYPGHPLQPAALSSSAAQAALPGHPLYTYGFMLQNEPLPHSCNWVAASGPCDKRFATSEELLSHLRTHTALPGAEKLLAAYPGASSLGSAAAAAAAAASCHLHLPPPAAPGSPGSLSLRSPHTLGLSRYHPYGKSHLSTAGGLAVPSLPTAGPYYSPYALYGQRLASASALGYQ</sequence>
<proteinExistence type="evidence at protein level"/>